<reference key="1">
    <citation type="journal article" date="2009" name="J. Bacteriol.">
        <title>Complete genome sequence and comparative genome analysis of enteropathogenic Escherichia coli O127:H6 strain E2348/69.</title>
        <authorList>
            <person name="Iguchi A."/>
            <person name="Thomson N.R."/>
            <person name="Ogura Y."/>
            <person name="Saunders D."/>
            <person name="Ooka T."/>
            <person name="Henderson I.R."/>
            <person name="Harris D."/>
            <person name="Asadulghani M."/>
            <person name="Kurokawa K."/>
            <person name="Dean P."/>
            <person name="Kenny B."/>
            <person name="Quail M.A."/>
            <person name="Thurston S."/>
            <person name="Dougan G."/>
            <person name="Hayashi T."/>
            <person name="Parkhill J."/>
            <person name="Frankel G."/>
        </authorList>
    </citation>
    <scope>NUCLEOTIDE SEQUENCE [LARGE SCALE GENOMIC DNA]</scope>
    <source>
        <strain>E2348/69 / EPEC</strain>
    </source>
</reference>
<gene>
    <name evidence="1" type="primary">pyrG</name>
    <name type="ordered locus">E2348C_3047</name>
</gene>
<comment type="function">
    <text evidence="1">Catalyzes the ATP-dependent amination of UTP to CTP with either L-glutamine or ammonia as the source of nitrogen. Regulates intracellular CTP levels through interactions with the four ribonucleotide triphosphates.</text>
</comment>
<comment type="catalytic activity">
    <reaction evidence="1">
        <text>UTP + L-glutamine + ATP + H2O = CTP + L-glutamate + ADP + phosphate + 2 H(+)</text>
        <dbReference type="Rhea" id="RHEA:26426"/>
        <dbReference type="ChEBI" id="CHEBI:15377"/>
        <dbReference type="ChEBI" id="CHEBI:15378"/>
        <dbReference type="ChEBI" id="CHEBI:29985"/>
        <dbReference type="ChEBI" id="CHEBI:30616"/>
        <dbReference type="ChEBI" id="CHEBI:37563"/>
        <dbReference type="ChEBI" id="CHEBI:43474"/>
        <dbReference type="ChEBI" id="CHEBI:46398"/>
        <dbReference type="ChEBI" id="CHEBI:58359"/>
        <dbReference type="ChEBI" id="CHEBI:456216"/>
        <dbReference type="EC" id="6.3.4.2"/>
    </reaction>
</comment>
<comment type="catalytic activity">
    <reaction evidence="1">
        <text>L-glutamine + H2O = L-glutamate + NH4(+)</text>
        <dbReference type="Rhea" id="RHEA:15889"/>
        <dbReference type="ChEBI" id="CHEBI:15377"/>
        <dbReference type="ChEBI" id="CHEBI:28938"/>
        <dbReference type="ChEBI" id="CHEBI:29985"/>
        <dbReference type="ChEBI" id="CHEBI:58359"/>
    </reaction>
</comment>
<comment type="catalytic activity">
    <reaction evidence="1">
        <text>UTP + NH4(+) + ATP = CTP + ADP + phosphate + 2 H(+)</text>
        <dbReference type="Rhea" id="RHEA:16597"/>
        <dbReference type="ChEBI" id="CHEBI:15378"/>
        <dbReference type="ChEBI" id="CHEBI:28938"/>
        <dbReference type="ChEBI" id="CHEBI:30616"/>
        <dbReference type="ChEBI" id="CHEBI:37563"/>
        <dbReference type="ChEBI" id="CHEBI:43474"/>
        <dbReference type="ChEBI" id="CHEBI:46398"/>
        <dbReference type="ChEBI" id="CHEBI:456216"/>
    </reaction>
</comment>
<comment type="activity regulation">
    <text evidence="1">Allosterically activated by GTP, when glutamine is the substrate; GTP has no effect on the reaction when ammonia is the substrate. The allosteric effector GTP functions by stabilizing the protein conformation that binds the tetrahedral intermediate(s) formed during glutamine hydrolysis. Inhibited by the product CTP, via allosteric rather than competitive inhibition.</text>
</comment>
<comment type="pathway">
    <text evidence="1">Pyrimidine metabolism; CTP biosynthesis via de novo pathway; CTP from UDP: step 2/2.</text>
</comment>
<comment type="subunit">
    <text evidence="1">Homotetramer.</text>
</comment>
<comment type="miscellaneous">
    <text evidence="1">CTPSs have evolved a hybrid strategy for distinguishing between UTP and CTP. The overlapping regions of the product feedback inhibitory and substrate sites recognize a common feature in both compounds, the triphosphate moiety. To differentiate isosteric substrate and product pyrimidine rings, an additional pocket far from the expected kinase/ligase catalytic site, specifically recognizes the cytosine and ribose portions of the product inhibitor.</text>
</comment>
<comment type="similarity">
    <text evidence="1">Belongs to the CTP synthase family.</text>
</comment>
<accession>B7UHJ6</accession>
<keyword id="KW-0067">ATP-binding</keyword>
<keyword id="KW-0315">Glutamine amidotransferase</keyword>
<keyword id="KW-0436">Ligase</keyword>
<keyword id="KW-0460">Magnesium</keyword>
<keyword id="KW-0479">Metal-binding</keyword>
<keyword id="KW-0547">Nucleotide-binding</keyword>
<keyword id="KW-0665">Pyrimidine biosynthesis</keyword>
<keyword id="KW-1185">Reference proteome</keyword>
<sequence length="545" mass="60376">MTTNYIFVTGGVVSSLGKGIAAASLAAILEARGLNVTIMKLDPYINVDPGTMSPIQHGEVFVTEDGAETDLDLGHYERFIRTKMSRRNNFTTGRIYSDVLRKERRGDYLGATVQVIPHITNAIKERVLEGGEGHDVVLVEIGGTVGDIESLPFLEAIRQMAVEIGREHTLFMHLTLVPYMAASGEVKTKPTQHSVKELLSIGIQPDILICRSDRAVPANERAKIALFCNVPEKAVISLKDVDSIYKIPGLLKSQGLDDYICKRFSLDCPEANLSEWEQVIFEEANPVSEVTIGMVGKYIELPDAYKSVIEALKHGGLKNRVSVNIKLIDSQDVETRGVEILKGLDAILVPGGFGYRGVEGMITTARFARENNIPYLGICLGMQVALIDYARHVANMENANSTEFVPDCKYPVVALITEWRDENGNVEVRSEKSDLGGTMRLGAQQCQLVDDSLVRQLYDAPTIVERHRHRYEVNNMLLKQIEDAGLRVAGRSGDDQLVEIIEVPNHPWFVACQFHPEFTSTPRDGHPLFAGFVKAASEFQKRQAK</sequence>
<feature type="chain" id="PRO_1000164942" description="CTP synthase">
    <location>
        <begin position="1"/>
        <end position="545"/>
    </location>
</feature>
<feature type="domain" description="Glutamine amidotransferase type-1" evidence="1">
    <location>
        <begin position="291"/>
        <end position="542"/>
    </location>
</feature>
<feature type="region of interest" description="Amidoligase domain" evidence="1">
    <location>
        <begin position="1"/>
        <end position="266"/>
    </location>
</feature>
<feature type="active site" description="Nucleophile; for glutamine hydrolysis" evidence="1">
    <location>
        <position position="379"/>
    </location>
</feature>
<feature type="active site" evidence="1">
    <location>
        <position position="515"/>
    </location>
</feature>
<feature type="active site" evidence="1">
    <location>
        <position position="517"/>
    </location>
</feature>
<feature type="binding site" evidence="1">
    <location>
        <position position="14"/>
    </location>
    <ligand>
        <name>CTP</name>
        <dbReference type="ChEBI" id="CHEBI:37563"/>
        <note>allosteric inhibitor</note>
    </ligand>
</feature>
<feature type="binding site" evidence="1">
    <location>
        <position position="14"/>
    </location>
    <ligand>
        <name>UTP</name>
        <dbReference type="ChEBI" id="CHEBI:46398"/>
    </ligand>
</feature>
<feature type="binding site" evidence="1">
    <location>
        <begin position="15"/>
        <end position="20"/>
    </location>
    <ligand>
        <name>ATP</name>
        <dbReference type="ChEBI" id="CHEBI:30616"/>
    </ligand>
</feature>
<feature type="binding site" evidence="1">
    <location>
        <position position="72"/>
    </location>
    <ligand>
        <name>ATP</name>
        <dbReference type="ChEBI" id="CHEBI:30616"/>
    </ligand>
</feature>
<feature type="binding site" evidence="1">
    <location>
        <position position="72"/>
    </location>
    <ligand>
        <name>Mg(2+)</name>
        <dbReference type="ChEBI" id="CHEBI:18420"/>
    </ligand>
</feature>
<feature type="binding site" evidence="1">
    <location>
        <position position="140"/>
    </location>
    <ligand>
        <name>Mg(2+)</name>
        <dbReference type="ChEBI" id="CHEBI:18420"/>
    </ligand>
</feature>
<feature type="binding site" evidence="1">
    <location>
        <begin position="147"/>
        <end position="149"/>
    </location>
    <ligand>
        <name>CTP</name>
        <dbReference type="ChEBI" id="CHEBI:37563"/>
        <note>allosteric inhibitor</note>
    </ligand>
</feature>
<feature type="binding site" evidence="1">
    <location>
        <begin position="187"/>
        <end position="192"/>
    </location>
    <ligand>
        <name>CTP</name>
        <dbReference type="ChEBI" id="CHEBI:37563"/>
        <note>allosteric inhibitor</note>
    </ligand>
</feature>
<feature type="binding site" evidence="1">
    <location>
        <begin position="187"/>
        <end position="192"/>
    </location>
    <ligand>
        <name>UTP</name>
        <dbReference type="ChEBI" id="CHEBI:46398"/>
    </ligand>
</feature>
<feature type="binding site" evidence="1">
    <location>
        <position position="223"/>
    </location>
    <ligand>
        <name>CTP</name>
        <dbReference type="ChEBI" id="CHEBI:37563"/>
        <note>allosteric inhibitor</note>
    </ligand>
</feature>
<feature type="binding site" evidence="1">
    <location>
        <position position="223"/>
    </location>
    <ligand>
        <name>UTP</name>
        <dbReference type="ChEBI" id="CHEBI:46398"/>
    </ligand>
</feature>
<feature type="binding site" evidence="1">
    <location>
        <begin position="239"/>
        <end position="241"/>
    </location>
    <ligand>
        <name>ATP</name>
        <dbReference type="ChEBI" id="CHEBI:30616"/>
    </ligand>
</feature>
<feature type="binding site" evidence="1">
    <location>
        <position position="352"/>
    </location>
    <ligand>
        <name>L-glutamine</name>
        <dbReference type="ChEBI" id="CHEBI:58359"/>
    </ligand>
</feature>
<feature type="binding site" evidence="1">
    <location>
        <begin position="380"/>
        <end position="383"/>
    </location>
    <ligand>
        <name>L-glutamine</name>
        <dbReference type="ChEBI" id="CHEBI:58359"/>
    </ligand>
</feature>
<feature type="binding site" evidence="1">
    <location>
        <position position="403"/>
    </location>
    <ligand>
        <name>L-glutamine</name>
        <dbReference type="ChEBI" id="CHEBI:58359"/>
    </ligand>
</feature>
<feature type="binding site" evidence="1">
    <location>
        <position position="470"/>
    </location>
    <ligand>
        <name>L-glutamine</name>
        <dbReference type="ChEBI" id="CHEBI:58359"/>
    </ligand>
</feature>
<evidence type="ECO:0000255" key="1">
    <source>
        <dbReference type="HAMAP-Rule" id="MF_01227"/>
    </source>
</evidence>
<proteinExistence type="inferred from homology"/>
<name>PYRG_ECO27</name>
<protein>
    <recommendedName>
        <fullName evidence="1">CTP synthase</fullName>
        <ecNumber evidence="1">6.3.4.2</ecNumber>
    </recommendedName>
    <alternativeName>
        <fullName evidence="1">Cytidine 5'-triphosphate synthase</fullName>
    </alternativeName>
    <alternativeName>
        <fullName evidence="1">Cytidine triphosphate synthetase</fullName>
        <shortName evidence="1">CTP synthetase</shortName>
        <shortName evidence="1">CTPS</shortName>
    </alternativeName>
    <alternativeName>
        <fullName evidence="1">UTP--ammonia ligase</fullName>
    </alternativeName>
</protein>
<dbReference type="EC" id="6.3.4.2" evidence="1"/>
<dbReference type="EMBL" id="FM180568">
    <property type="protein sequence ID" value="CAS10595.1"/>
    <property type="molecule type" value="Genomic_DNA"/>
</dbReference>
<dbReference type="RefSeq" id="WP_000210870.1">
    <property type="nucleotide sequence ID" value="NC_011601.1"/>
</dbReference>
<dbReference type="SMR" id="B7UHJ6"/>
<dbReference type="MEROPS" id="C26.964"/>
<dbReference type="KEGG" id="ecg:E2348C_3047"/>
<dbReference type="HOGENOM" id="CLU_011675_5_0_6"/>
<dbReference type="UniPathway" id="UPA00159">
    <property type="reaction ID" value="UER00277"/>
</dbReference>
<dbReference type="Proteomes" id="UP000008205">
    <property type="component" value="Chromosome"/>
</dbReference>
<dbReference type="GO" id="GO:0005829">
    <property type="term" value="C:cytosol"/>
    <property type="evidence" value="ECO:0007669"/>
    <property type="project" value="TreeGrafter"/>
</dbReference>
<dbReference type="GO" id="GO:0005524">
    <property type="term" value="F:ATP binding"/>
    <property type="evidence" value="ECO:0007669"/>
    <property type="project" value="UniProtKB-KW"/>
</dbReference>
<dbReference type="GO" id="GO:0003883">
    <property type="term" value="F:CTP synthase activity"/>
    <property type="evidence" value="ECO:0007669"/>
    <property type="project" value="UniProtKB-UniRule"/>
</dbReference>
<dbReference type="GO" id="GO:0004359">
    <property type="term" value="F:glutaminase activity"/>
    <property type="evidence" value="ECO:0007669"/>
    <property type="project" value="RHEA"/>
</dbReference>
<dbReference type="GO" id="GO:0042802">
    <property type="term" value="F:identical protein binding"/>
    <property type="evidence" value="ECO:0007669"/>
    <property type="project" value="TreeGrafter"/>
</dbReference>
<dbReference type="GO" id="GO:0046872">
    <property type="term" value="F:metal ion binding"/>
    <property type="evidence" value="ECO:0007669"/>
    <property type="project" value="UniProtKB-KW"/>
</dbReference>
<dbReference type="GO" id="GO:0044210">
    <property type="term" value="P:'de novo' CTP biosynthetic process"/>
    <property type="evidence" value="ECO:0007669"/>
    <property type="project" value="UniProtKB-UniRule"/>
</dbReference>
<dbReference type="GO" id="GO:0019856">
    <property type="term" value="P:pyrimidine nucleobase biosynthetic process"/>
    <property type="evidence" value="ECO:0007669"/>
    <property type="project" value="TreeGrafter"/>
</dbReference>
<dbReference type="CDD" id="cd03113">
    <property type="entry name" value="CTPS_N"/>
    <property type="match status" value="1"/>
</dbReference>
<dbReference type="CDD" id="cd01746">
    <property type="entry name" value="GATase1_CTP_Synthase"/>
    <property type="match status" value="1"/>
</dbReference>
<dbReference type="FunFam" id="3.40.50.300:FF:000009">
    <property type="entry name" value="CTP synthase"/>
    <property type="match status" value="1"/>
</dbReference>
<dbReference type="FunFam" id="3.40.50.880:FF:000002">
    <property type="entry name" value="CTP synthase"/>
    <property type="match status" value="1"/>
</dbReference>
<dbReference type="Gene3D" id="3.40.50.880">
    <property type="match status" value="1"/>
</dbReference>
<dbReference type="Gene3D" id="3.40.50.300">
    <property type="entry name" value="P-loop containing nucleotide triphosphate hydrolases"/>
    <property type="match status" value="1"/>
</dbReference>
<dbReference type="HAMAP" id="MF_01227">
    <property type="entry name" value="PyrG"/>
    <property type="match status" value="1"/>
</dbReference>
<dbReference type="InterPro" id="IPR029062">
    <property type="entry name" value="Class_I_gatase-like"/>
</dbReference>
<dbReference type="InterPro" id="IPR004468">
    <property type="entry name" value="CTP_synthase"/>
</dbReference>
<dbReference type="InterPro" id="IPR017456">
    <property type="entry name" value="CTP_synthase_N"/>
</dbReference>
<dbReference type="InterPro" id="IPR017926">
    <property type="entry name" value="GATASE"/>
</dbReference>
<dbReference type="InterPro" id="IPR033828">
    <property type="entry name" value="GATase1_CTP_Synthase"/>
</dbReference>
<dbReference type="InterPro" id="IPR027417">
    <property type="entry name" value="P-loop_NTPase"/>
</dbReference>
<dbReference type="NCBIfam" id="NF003792">
    <property type="entry name" value="PRK05380.1"/>
    <property type="match status" value="1"/>
</dbReference>
<dbReference type="NCBIfam" id="TIGR00337">
    <property type="entry name" value="PyrG"/>
    <property type="match status" value="1"/>
</dbReference>
<dbReference type="PANTHER" id="PTHR11550">
    <property type="entry name" value="CTP SYNTHASE"/>
    <property type="match status" value="1"/>
</dbReference>
<dbReference type="PANTHER" id="PTHR11550:SF0">
    <property type="entry name" value="CTP SYNTHASE-RELATED"/>
    <property type="match status" value="1"/>
</dbReference>
<dbReference type="Pfam" id="PF06418">
    <property type="entry name" value="CTP_synth_N"/>
    <property type="match status" value="1"/>
</dbReference>
<dbReference type="Pfam" id="PF00117">
    <property type="entry name" value="GATase"/>
    <property type="match status" value="1"/>
</dbReference>
<dbReference type="SUPFAM" id="SSF52317">
    <property type="entry name" value="Class I glutamine amidotransferase-like"/>
    <property type="match status" value="1"/>
</dbReference>
<dbReference type="SUPFAM" id="SSF52540">
    <property type="entry name" value="P-loop containing nucleoside triphosphate hydrolases"/>
    <property type="match status" value="1"/>
</dbReference>
<dbReference type="PROSITE" id="PS51273">
    <property type="entry name" value="GATASE_TYPE_1"/>
    <property type="match status" value="1"/>
</dbReference>
<organism>
    <name type="scientific">Escherichia coli O127:H6 (strain E2348/69 / EPEC)</name>
    <dbReference type="NCBI Taxonomy" id="574521"/>
    <lineage>
        <taxon>Bacteria</taxon>
        <taxon>Pseudomonadati</taxon>
        <taxon>Pseudomonadota</taxon>
        <taxon>Gammaproteobacteria</taxon>
        <taxon>Enterobacterales</taxon>
        <taxon>Enterobacteriaceae</taxon>
        <taxon>Escherichia</taxon>
    </lineage>
</organism>